<accession>Q196T7</accession>
<organism>
    <name type="scientific">Invertebrate iridescent virus 3</name>
    <name type="common">IIV-3</name>
    <name type="synonym">Mosquito iridescent virus</name>
    <dbReference type="NCBI Taxonomy" id="345201"/>
    <lineage>
        <taxon>Viruses</taxon>
        <taxon>Varidnaviria</taxon>
        <taxon>Bamfordvirae</taxon>
        <taxon>Nucleocytoviricota</taxon>
        <taxon>Megaviricetes</taxon>
        <taxon>Pimascovirales</taxon>
        <taxon>Iridoviridae</taxon>
        <taxon>Betairidovirinae</taxon>
        <taxon>Chloriridovirus</taxon>
    </lineage>
</organism>
<feature type="chain" id="PRO_0000377820" description="Uncharacterized protein 123L">
    <location>
        <begin position="1"/>
        <end position="139"/>
    </location>
</feature>
<organismHost>
    <name type="scientific">Aedes vexans</name>
    <name type="common">Inland floodwater mosquito</name>
    <name type="synonym">Culex vexans</name>
    <dbReference type="NCBI Taxonomy" id="7163"/>
</organismHost>
<organismHost>
    <name type="scientific">Culex territans</name>
    <dbReference type="NCBI Taxonomy" id="42431"/>
</organismHost>
<organismHost>
    <name type="scientific">Culiseta annulata</name>
    <dbReference type="NCBI Taxonomy" id="332058"/>
</organismHost>
<organismHost>
    <name type="scientific">Ochlerotatus sollicitans</name>
    <name type="common">eastern saltmarsh mosquito</name>
    <dbReference type="NCBI Taxonomy" id="310513"/>
</organismHost>
<organismHost>
    <name type="scientific">Ochlerotatus taeniorhynchus</name>
    <name type="common">Black salt marsh mosquito</name>
    <name type="synonym">Aedes taeniorhynchus</name>
    <dbReference type="NCBI Taxonomy" id="329105"/>
</organismHost>
<organismHost>
    <name type="scientific">Psorophora ferox</name>
    <dbReference type="NCBI Taxonomy" id="7183"/>
</organismHost>
<reference key="1">
    <citation type="journal article" date="2006" name="J. Virol.">
        <title>Genome of invertebrate iridescent virus type 3 (mosquito iridescent virus).</title>
        <authorList>
            <person name="Delhon G."/>
            <person name="Tulman E.R."/>
            <person name="Afonso C.L."/>
            <person name="Lu Z."/>
            <person name="Becnel J.J."/>
            <person name="Moser B.A."/>
            <person name="Kutish G.F."/>
            <person name="Rock D.L."/>
        </authorList>
    </citation>
    <scope>NUCLEOTIDE SEQUENCE [LARGE SCALE GENOMIC DNA]</scope>
</reference>
<name>123L_IIV3</name>
<gene>
    <name type="ORF">IIV3-123L</name>
</gene>
<protein>
    <recommendedName>
        <fullName>Uncharacterized protein 123L</fullName>
    </recommendedName>
</protein>
<dbReference type="EMBL" id="DQ643392">
    <property type="protein sequence ID" value="ABF82153.1"/>
    <property type="molecule type" value="Genomic_DNA"/>
</dbReference>
<dbReference type="RefSeq" id="YP_654695.1">
    <property type="nucleotide sequence ID" value="NC_008187.1"/>
</dbReference>
<dbReference type="KEGG" id="vg:4156334"/>
<dbReference type="OrthoDB" id="35462at10239"/>
<dbReference type="Proteomes" id="UP000001358">
    <property type="component" value="Genome"/>
</dbReference>
<sequence>MNSCRVAPTPHEVTIDPGPSVLLQVEKLWLKYHELQTLYYSAYVESFHFRYFHIEALRYLKLYNNFKTVCRLLERVKRLLSLKYATFTPEMGGGGCGGGCGGGDVPSTLGSEELKVLVNYKDIKKFLDTNNLWSVVESS</sequence>
<proteinExistence type="predicted"/>
<keyword id="KW-1185">Reference proteome</keyword>